<proteinExistence type="inferred from homology"/>
<reference key="1">
    <citation type="journal article" date="2009" name="J. Bacteriol.">
        <title>Genomic sequencing reveals regulatory mutations and recombinational events in the widely used MC4100 lineage of Escherichia coli K-12.</title>
        <authorList>
            <person name="Ferenci T."/>
            <person name="Zhou Z."/>
            <person name="Betteridge T."/>
            <person name="Ren Y."/>
            <person name="Liu Y."/>
            <person name="Feng L."/>
            <person name="Reeves P.R."/>
            <person name="Wang L."/>
        </authorList>
    </citation>
    <scope>NUCLEOTIDE SEQUENCE [LARGE SCALE GENOMIC DNA]</scope>
    <source>
        <strain>K12 / MC4100 / BW2952</strain>
    </source>
</reference>
<accession>C4ZXV1</accession>
<name>UVRB_ECOBW</name>
<comment type="function">
    <text evidence="1">The UvrABC repair system catalyzes the recognition and processing of DNA lesions. A damage recognition complex composed of 2 UvrA and 2 UvrB subunits scans DNA for abnormalities. Upon binding of the UvrA(2)B(2) complex to a putative damaged site, the DNA wraps around one UvrB monomer. DNA wrap is dependent on ATP binding by UvrB and probably causes local melting of the DNA helix, facilitating insertion of UvrB beta-hairpin between the DNA strands. Then UvrB probes one DNA strand for the presence of a lesion. If a lesion is found the UvrA subunits dissociate and the UvrB-DNA preincision complex is formed. This complex is subsequently bound by UvrC and the second UvrB is released. If no lesion is found, the DNA wraps around the other UvrB subunit that will check the other stand for damage.</text>
</comment>
<comment type="subunit">
    <text evidence="1">Forms a heterotetramer with UvrA during the search for lesions. Interacts with UvrC in an incision complex.</text>
</comment>
<comment type="subcellular location">
    <subcellularLocation>
        <location evidence="1">Cytoplasm</location>
    </subcellularLocation>
</comment>
<comment type="domain">
    <text evidence="1">The beta-hairpin motif is involved in DNA binding.</text>
</comment>
<comment type="similarity">
    <text evidence="1">Belongs to the UvrB family.</text>
</comment>
<keyword id="KW-0067">ATP-binding</keyword>
<keyword id="KW-0963">Cytoplasm</keyword>
<keyword id="KW-0227">DNA damage</keyword>
<keyword id="KW-0228">DNA excision</keyword>
<keyword id="KW-0234">DNA repair</keyword>
<keyword id="KW-0267">Excision nuclease</keyword>
<keyword id="KW-0347">Helicase</keyword>
<keyword id="KW-0378">Hydrolase</keyword>
<keyword id="KW-0547">Nucleotide-binding</keyword>
<keyword id="KW-0742">SOS response</keyword>
<organism>
    <name type="scientific">Escherichia coli (strain K12 / MC4100 / BW2952)</name>
    <dbReference type="NCBI Taxonomy" id="595496"/>
    <lineage>
        <taxon>Bacteria</taxon>
        <taxon>Pseudomonadati</taxon>
        <taxon>Pseudomonadota</taxon>
        <taxon>Gammaproteobacteria</taxon>
        <taxon>Enterobacterales</taxon>
        <taxon>Enterobacteriaceae</taxon>
        <taxon>Escherichia</taxon>
    </lineage>
</organism>
<dbReference type="EMBL" id="CP001396">
    <property type="protein sequence ID" value="ACR63046.1"/>
    <property type="molecule type" value="Genomic_DNA"/>
</dbReference>
<dbReference type="RefSeq" id="WP_000042533.1">
    <property type="nucleotide sequence ID" value="NC_012759.1"/>
</dbReference>
<dbReference type="SMR" id="C4ZXV1"/>
<dbReference type="GeneID" id="93776651"/>
<dbReference type="KEGG" id="ebw:BWG_0632"/>
<dbReference type="HOGENOM" id="CLU_009621_2_1_6"/>
<dbReference type="GO" id="GO:0005737">
    <property type="term" value="C:cytoplasm"/>
    <property type="evidence" value="ECO:0007669"/>
    <property type="project" value="UniProtKB-SubCell"/>
</dbReference>
<dbReference type="GO" id="GO:0009380">
    <property type="term" value="C:excinuclease repair complex"/>
    <property type="evidence" value="ECO:0007669"/>
    <property type="project" value="InterPro"/>
</dbReference>
<dbReference type="GO" id="GO:0005524">
    <property type="term" value="F:ATP binding"/>
    <property type="evidence" value="ECO:0007669"/>
    <property type="project" value="UniProtKB-UniRule"/>
</dbReference>
<dbReference type="GO" id="GO:0016887">
    <property type="term" value="F:ATP hydrolysis activity"/>
    <property type="evidence" value="ECO:0007669"/>
    <property type="project" value="InterPro"/>
</dbReference>
<dbReference type="GO" id="GO:0003677">
    <property type="term" value="F:DNA binding"/>
    <property type="evidence" value="ECO:0007669"/>
    <property type="project" value="UniProtKB-UniRule"/>
</dbReference>
<dbReference type="GO" id="GO:0009381">
    <property type="term" value="F:excinuclease ABC activity"/>
    <property type="evidence" value="ECO:0007669"/>
    <property type="project" value="UniProtKB-UniRule"/>
</dbReference>
<dbReference type="GO" id="GO:0004386">
    <property type="term" value="F:helicase activity"/>
    <property type="evidence" value="ECO:0007669"/>
    <property type="project" value="UniProtKB-KW"/>
</dbReference>
<dbReference type="GO" id="GO:0006289">
    <property type="term" value="P:nucleotide-excision repair"/>
    <property type="evidence" value="ECO:0007669"/>
    <property type="project" value="UniProtKB-UniRule"/>
</dbReference>
<dbReference type="GO" id="GO:0009432">
    <property type="term" value="P:SOS response"/>
    <property type="evidence" value="ECO:0007669"/>
    <property type="project" value="UniProtKB-UniRule"/>
</dbReference>
<dbReference type="CDD" id="cd17916">
    <property type="entry name" value="DEXHc_UvrB"/>
    <property type="match status" value="1"/>
</dbReference>
<dbReference type="CDD" id="cd18790">
    <property type="entry name" value="SF2_C_UvrB"/>
    <property type="match status" value="1"/>
</dbReference>
<dbReference type="FunFam" id="3.40.50.300:FF:000257">
    <property type="entry name" value="UvrABC system protein B"/>
    <property type="match status" value="1"/>
</dbReference>
<dbReference type="FunFam" id="3.40.50.300:FF:000401">
    <property type="entry name" value="UvrABC system protein B"/>
    <property type="match status" value="1"/>
</dbReference>
<dbReference type="FunFam" id="3.40.50.300:FF:000477">
    <property type="entry name" value="UvrABC system protein B"/>
    <property type="match status" value="1"/>
</dbReference>
<dbReference type="Gene3D" id="3.40.50.300">
    <property type="entry name" value="P-loop containing nucleotide triphosphate hydrolases"/>
    <property type="match status" value="3"/>
</dbReference>
<dbReference type="Gene3D" id="4.10.860.10">
    <property type="entry name" value="UVR domain"/>
    <property type="match status" value="1"/>
</dbReference>
<dbReference type="HAMAP" id="MF_00204">
    <property type="entry name" value="UvrB"/>
    <property type="match status" value="1"/>
</dbReference>
<dbReference type="InterPro" id="IPR006935">
    <property type="entry name" value="Helicase/UvrB_N"/>
</dbReference>
<dbReference type="InterPro" id="IPR014001">
    <property type="entry name" value="Helicase_ATP-bd"/>
</dbReference>
<dbReference type="InterPro" id="IPR001650">
    <property type="entry name" value="Helicase_C-like"/>
</dbReference>
<dbReference type="InterPro" id="IPR027417">
    <property type="entry name" value="P-loop_NTPase"/>
</dbReference>
<dbReference type="InterPro" id="IPR001943">
    <property type="entry name" value="UVR_dom"/>
</dbReference>
<dbReference type="InterPro" id="IPR036876">
    <property type="entry name" value="UVR_dom_sf"/>
</dbReference>
<dbReference type="InterPro" id="IPR004807">
    <property type="entry name" value="UvrB"/>
</dbReference>
<dbReference type="InterPro" id="IPR041471">
    <property type="entry name" value="UvrB_inter"/>
</dbReference>
<dbReference type="InterPro" id="IPR024759">
    <property type="entry name" value="UvrB_YAD/RRR_dom"/>
</dbReference>
<dbReference type="NCBIfam" id="NF003673">
    <property type="entry name" value="PRK05298.1"/>
    <property type="match status" value="1"/>
</dbReference>
<dbReference type="NCBIfam" id="TIGR00631">
    <property type="entry name" value="uvrb"/>
    <property type="match status" value="1"/>
</dbReference>
<dbReference type="PANTHER" id="PTHR24029">
    <property type="entry name" value="UVRABC SYSTEM PROTEIN B"/>
    <property type="match status" value="1"/>
</dbReference>
<dbReference type="PANTHER" id="PTHR24029:SF0">
    <property type="entry name" value="UVRABC SYSTEM PROTEIN B"/>
    <property type="match status" value="1"/>
</dbReference>
<dbReference type="Pfam" id="PF00271">
    <property type="entry name" value="Helicase_C"/>
    <property type="match status" value="1"/>
</dbReference>
<dbReference type="Pfam" id="PF04851">
    <property type="entry name" value="ResIII"/>
    <property type="match status" value="1"/>
</dbReference>
<dbReference type="Pfam" id="PF02151">
    <property type="entry name" value="UVR"/>
    <property type="match status" value="1"/>
</dbReference>
<dbReference type="Pfam" id="PF12344">
    <property type="entry name" value="UvrB"/>
    <property type="match status" value="1"/>
</dbReference>
<dbReference type="Pfam" id="PF17757">
    <property type="entry name" value="UvrB_inter"/>
    <property type="match status" value="1"/>
</dbReference>
<dbReference type="SMART" id="SM00487">
    <property type="entry name" value="DEXDc"/>
    <property type="match status" value="1"/>
</dbReference>
<dbReference type="SMART" id="SM00490">
    <property type="entry name" value="HELICc"/>
    <property type="match status" value="1"/>
</dbReference>
<dbReference type="SUPFAM" id="SSF46600">
    <property type="entry name" value="C-terminal UvrC-binding domain of UvrB"/>
    <property type="match status" value="1"/>
</dbReference>
<dbReference type="SUPFAM" id="SSF52540">
    <property type="entry name" value="P-loop containing nucleoside triphosphate hydrolases"/>
    <property type="match status" value="2"/>
</dbReference>
<dbReference type="PROSITE" id="PS51192">
    <property type="entry name" value="HELICASE_ATP_BIND_1"/>
    <property type="match status" value="1"/>
</dbReference>
<dbReference type="PROSITE" id="PS51194">
    <property type="entry name" value="HELICASE_CTER"/>
    <property type="match status" value="1"/>
</dbReference>
<dbReference type="PROSITE" id="PS50151">
    <property type="entry name" value="UVR"/>
    <property type="match status" value="1"/>
</dbReference>
<evidence type="ECO:0000255" key="1">
    <source>
        <dbReference type="HAMAP-Rule" id="MF_00204"/>
    </source>
</evidence>
<evidence type="ECO:0000256" key="2">
    <source>
        <dbReference type="SAM" id="MobiDB-lite"/>
    </source>
</evidence>
<protein>
    <recommendedName>
        <fullName evidence="1">UvrABC system protein B</fullName>
        <shortName evidence="1">Protein UvrB</shortName>
    </recommendedName>
    <alternativeName>
        <fullName evidence="1">Excinuclease ABC subunit B</fullName>
    </alternativeName>
</protein>
<sequence length="673" mass="76226">MSKPFKLNSAFKPSGDQPEAIRRLEEGLEDGLAHQTLLGVTGSGKTFTIANVIADLQRPTMVLAPNKTLAAQLYGEMKEFFPENAVEYFVSYYDYYQPEAYVPSSDTFIEKDASVNEHIEQMRLSATKAMLERRDVVVVASVSAIYGLGDPDLYLKMMLHLTVGMIIDQRAILRRLAELQYARNDQAFQRGTFRVRGEVIDIFPAESDDIALRVELFDEEVERLSLFDPLTGQIVSTIPRFTIYPKTHYVTPRERIVQAMEEIKEELAARRKVLLENNKLLEEQRLTQRTQFDLEMMNELGYCSGIENYSRFLSGRGPGEPPPTLFDYLPADGLLVVDESHVTIPQIGGMYRGDRARKETLVEYGFRLPSALDNRPLKFEEFEALAPQTIYVSATPGNYELEKSGGDVVDQVVRPTGLLDPIIEVRPVATQVDDLLSEIRQRAAINERVLVTTLTKRMAEDLTEYLEEHGERVRYLHSDIDTVERMEIIRDLRLGEFDVLVGINLLREGLDMPEVSLVAILDADKEGFLRSERSLIQTIGRAARNVNGKAILYGDKITPSMAKAIGETERRREKQQKYNEEHGITPQGLNKKVVDILALGQNIAKTKAKGRGKSRPIVEPDNVPMDMSPKALQQKIHELEGLMMQHAQNLEFEEAAQIRDQLHQLRELFIAAS</sequence>
<gene>
    <name evidence="1" type="primary">uvrB</name>
    <name type="ordered locus">BWG_0632</name>
</gene>
<feature type="chain" id="PRO_1000204131" description="UvrABC system protein B">
    <location>
        <begin position="1"/>
        <end position="673"/>
    </location>
</feature>
<feature type="domain" description="Helicase ATP-binding" evidence="1">
    <location>
        <begin position="26"/>
        <end position="183"/>
    </location>
</feature>
<feature type="domain" description="Helicase C-terminal" evidence="1">
    <location>
        <begin position="431"/>
        <end position="597"/>
    </location>
</feature>
<feature type="domain" description="UVR" evidence="1">
    <location>
        <begin position="633"/>
        <end position="668"/>
    </location>
</feature>
<feature type="region of interest" description="Disordered" evidence="2">
    <location>
        <begin position="608"/>
        <end position="627"/>
    </location>
</feature>
<feature type="short sequence motif" description="Beta-hairpin">
    <location>
        <begin position="92"/>
        <end position="115"/>
    </location>
</feature>
<feature type="binding site" evidence="1">
    <location>
        <begin position="39"/>
        <end position="46"/>
    </location>
    <ligand>
        <name>ATP</name>
        <dbReference type="ChEBI" id="CHEBI:30616"/>
    </ligand>
</feature>